<protein>
    <recommendedName>
        <fullName evidence="1">Dual-specificity RNA methyltransferase RlmN</fullName>
        <ecNumber evidence="1">2.1.1.192</ecNumber>
    </recommendedName>
    <alternativeName>
        <fullName evidence="1">23S rRNA (adenine(2503)-C(2))-methyltransferase</fullName>
    </alternativeName>
    <alternativeName>
        <fullName evidence="1">23S rRNA m2A2503 methyltransferase</fullName>
    </alternativeName>
    <alternativeName>
        <fullName evidence="1">Ribosomal RNA large subunit methyltransferase N</fullName>
    </alternativeName>
    <alternativeName>
        <fullName evidence="1">tRNA (adenine(37)-C(2))-methyltransferase</fullName>
    </alternativeName>
    <alternativeName>
        <fullName evidence="1">tRNA m2A37 methyltransferase</fullName>
    </alternativeName>
</protein>
<sequence>MLTPVNLLDFDVDGLVTWFAERGEKPFRARQVMRWMHRFGETDFGNMTDVAKSLRAKLAEEACIRAPRAIRDAVSVDGTRKWLLDVGSANAVEAVFIPETNRGTLCISSQAGCALDCAFCSTGKQGFNRNLSAAEIIGQLWLANRLLGGSASPAGSKDGDGGPDHASRATKLDHRAADAKGVQSDSWRSSDPEEDHNGRVISNVVMMGMGEPLANFDNVVTALRLMLDDHAYGLSRRRVTVSTSGIVPAMDRLRDECPVALAVSLHAPDDALRDRLVPINRKYPLRELMAACQRYLERAPRDFVTFEYVMLDDVNDSDAHARALVELVRDVPCKFNLIPFNPFPNSGFDRSPAERIRRFAAILIDAGIVTTTRKTRGDDVNAACGQLAGQVQDRSRRTVRLVKPMEGR</sequence>
<proteinExistence type="inferred from homology"/>
<name>RLMN_AROAE</name>
<accession>Q5P7B0</accession>
<feature type="chain" id="PRO_0000350022" description="Dual-specificity RNA methyltransferase RlmN">
    <location>
        <begin position="1"/>
        <end position="408"/>
    </location>
</feature>
<feature type="domain" description="Radical SAM core" evidence="2">
    <location>
        <begin position="99"/>
        <end position="379"/>
    </location>
</feature>
<feature type="region of interest" description="Disordered" evidence="3">
    <location>
        <begin position="152"/>
        <end position="196"/>
    </location>
</feature>
<feature type="compositionally biased region" description="Basic and acidic residues" evidence="3">
    <location>
        <begin position="157"/>
        <end position="178"/>
    </location>
</feature>
<feature type="active site" description="Proton acceptor" evidence="1">
    <location>
        <position position="93"/>
    </location>
</feature>
<feature type="active site" description="S-methylcysteine intermediate" evidence="1">
    <location>
        <position position="384"/>
    </location>
</feature>
<feature type="binding site" evidence="1">
    <location>
        <position position="113"/>
    </location>
    <ligand>
        <name>[4Fe-4S] cluster</name>
        <dbReference type="ChEBI" id="CHEBI:49883"/>
        <note>4Fe-4S-S-AdoMet</note>
    </ligand>
</feature>
<feature type="binding site" evidence="1">
    <location>
        <position position="117"/>
    </location>
    <ligand>
        <name>[4Fe-4S] cluster</name>
        <dbReference type="ChEBI" id="CHEBI:49883"/>
        <note>4Fe-4S-S-AdoMet</note>
    </ligand>
</feature>
<feature type="binding site" evidence="1">
    <location>
        <position position="120"/>
    </location>
    <ligand>
        <name>[4Fe-4S] cluster</name>
        <dbReference type="ChEBI" id="CHEBI:49883"/>
        <note>4Fe-4S-S-AdoMet</note>
    </ligand>
</feature>
<feature type="binding site" evidence="1">
    <location>
        <begin position="210"/>
        <end position="211"/>
    </location>
    <ligand>
        <name>S-adenosyl-L-methionine</name>
        <dbReference type="ChEBI" id="CHEBI:59789"/>
    </ligand>
</feature>
<feature type="binding site" evidence="1">
    <location>
        <position position="242"/>
    </location>
    <ligand>
        <name>S-adenosyl-L-methionine</name>
        <dbReference type="ChEBI" id="CHEBI:59789"/>
    </ligand>
</feature>
<feature type="binding site" evidence="1">
    <location>
        <begin position="264"/>
        <end position="266"/>
    </location>
    <ligand>
        <name>S-adenosyl-L-methionine</name>
        <dbReference type="ChEBI" id="CHEBI:59789"/>
    </ligand>
</feature>
<feature type="binding site" evidence="1">
    <location>
        <position position="341"/>
    </location>
    <ligand>
        <name>S-adenosyl-L-methionine</name>
        <dbReference type="ChEBI" id="CHEBI:59789"/>
    </ligand>
</feature>
<feature type="disulfide bond" description="(transient)" evidence="1">
    <location>
        <begin position="106"/>
        <end position="384"/>
    </location>
</feature>
<evidence type="ECO:0000255" key="1">
    <source>
        <dbReference type="HAMAP-Rule" id="MF_01849"/>
    </source>
</evidence>
<evidence type="ECO:0000255" key="2">
    <source>
        <dbReference type="PROSITE-ProRule" id="PRU01266"/>
    </source>
</evidence>
<evidence type="ECO:0000256" key="3">
    <source>
        <dbReference type="SAM" id="MobiDB-lite"/>
    </source>
</evidence>
<dbReference type="EC" id="2.1.1.192" evidence="1"/>
<dbReference type="EMBL" id="CR555306">
    <property type="protein sequence ID" value="CAI06801.1"/>
    <property type="molecule type" value="Genomic_DNA"/>
</dbReference>
<dbReference type="RefSeq" id="WP_011236529.1">
    <property type="nucleotide sequence ID" value="NC_006513.1"/>
</dbReference>
<dbReference type="SMR" id="Q5P7B0"/>
<dbReference type="STRING" id="76114.ebA1268"/>
<dbReference type="KEGG" id="eba:ebA1268"/>
<dbReference type="eggNOG" id="COG0820">
    <property type="taxonomic scope" value="Bacteria"/>
</dbReference>
<dbReference type="HOGENOM" id="CLU_029101_0_0_4"/>
<dbReference type="OrthoDB" id="9793973at2"/>
<dbReference type="Proteomes" id="UP000006552">
    <property type="component" value="Chromosome"/>
</dbReference>
<dbReference type="GO" id="GO:0005737">
    <property type="term" value="C:cytoplasm"/>
    <property type="evidence" value="ECO:0007669"/>
    <property type="project" value="UniProtKB-SubCell"/>
</dbReference>
<dbReference type="GO" id="GO:0051539">
    <property type="term" value="F:4 iron, 4 sulfur cluster binding"/>
    <property type="evidence" value="ECO:0007669"/>
    <property type="project" value="UniProtKB-UniRule"/>
</dbReference>
<dbReference type="GO" id="GO:0046872">
    <property type="term" value="F:metal ion binding"/>
    <property type="evidence" value="ECO:0007669"/>
    <property type="project" value="UniProtKB-KW"/>
</dbReference>
<dbReference type="GO" id="GO:0070040">
    <property type="term" value="F:rRNA (adenine(2503)-C2-)-methyltransferase activity"/>
    <property type="evidence" value="ECO:0007669"/>
    <property type="project" value="UniProtKB-UniRule"/>
</dbReference>
<dbReference type="GO" id="GO:0019843">
    <property type="term" value="F:rRNA binding"/>
    <property type="evidence" value="ECO:0007669"/>
    <property type="project" value="UniProtKB-UniRule"/>
</dbReference>
<dbReference type="GO" id="GO:0002935">
    <property type="term" value="F:tRNA (adenine(37)-C2)-methyltransferase activity"/>
    <property type="evidence" value="ECO:0007669"/>
    <property type="project" value="UniProtKB-UniRule"/>
</dbReference>
<dbReference type="GO" id="GO:0000049">
    <property type="term" value="F:tRNA binding"/>
    <property type="evidence" value="ECO:0007669"/>
    <property type="project" value="UniProtKB-UniRule"/>
</dbReference>
<dbReference type="GO" id="GO:0070475">
    <property type="term" value="P:rRNA base methylation"/>
    <property type="evidence" value="ECO:0007669"/>
    <property type="project" value="UniProtKB-UniRule"/>
</dbReference>
<dbReference type="GO" id="GO:0030488">
    <property type="term" value="P:tRNA methylation"/>
    <property type="evidence" value="ECO:0007669"/>
    <property type="project" value="UniProtKB-UniRule"/>
</dbReference>
<dbReference type="FunFam" id="1.10.150.530:FF:000003">
    <property type="entry name" value="Dual-specificity RNA methyltransferase RlmN"/>
    <property type="match status" value="1"/>
</dbReference>
<dbReference type="Gene3D" id="1.10.150.530">
    <property type="match status" value="1"/>
</dbReference>
<dbReference type="Gene3D" id="3.20.20.70">
    <property type="entry name" value="Aldolase class I"/>
    <property type="match status" value="1"/>
</dbReference>
<dbReference type="HAMAP" id="MF_01849">
    <property type="entry name" value="RNA_methyltr_RlmN"/>
    <property type="match status" value="1"/>
</dbReference>
<dbReference type="InterPro" id="IPR013785">
    <property type="entry name" value="Aldolase_TIM"/>
</dbReference>
<dbReference type="InterPro" id="IPR040072">
    <property type="entry name" value="Methyltransferase_A"/>
</dbReference>
<dbReference type="InterPro" id="IPR048641">
    <property type="entry name" value="RlmN_N"/>
</dbReference>
<dbReference type="InterPro" id="IPR027492">
    <property type="entry name" value="RNA_MTrfase_RlmN"/>
</dbReference>
<dbReference type="InterPro" id="IPR004383">
    <property type="entry name" value="rRNA_lsu_MTrfase_RlmN/Cfr"/>
</dbReference>
<dbReference type="InterPro" id="IPR007197">
    <property type="entry name" value="rSAM"/>
</dbReference>
<dbReference type="PANTHER" id="PTHR30544">
    <property type="entry name" value="23S RRNA METHYLTRANSFERASE"/>
    <property type="match status" value="1"/>
</dbReference>
<dbReference type="PANTHER" id="PTHR30544:SF5">
    <property type="entry name" value="RADICAL SAM CORE DOMAIN-CONTAINING PROTEIN"/>
    <property type="match status" value="1"/>
</dbReference>
<dbReference type="Pfam" id="PF04055">
    <property type="entry name" value="Radical_SAM"/>
    <property type="match status" value="1"/>
</dbReference>
<dbReference type="Pfam" id="PF21016">
    <property type="entry name" value="RlmN_N"/>
    <property type="match status" value="1"/>
</dbReference>
<dbReference type="PIRSF" id="PIRSF006004">
    <property type="entry name" value="CHP00048"/>
    <property type="match status" value="1"/>
</dbReference>
<dbReference type="SFLD" id="SFLDF00275">
    <property type="entry name" value="adenosine_C2_methyltransferase"/>
    <property type="match status" value="1"/>
</dbReference>
<dbReference type="SFLD" id="SFLDS00029">
    <property type="entry name" value="Radical_SAM"/>
    <property type="match status" value="1"/>
</dbReference>
<dbReference type="SUPFAM" id="SSF102114">
    <property type="entry name" value="Radical SAM enzymes"/>
    <property type="match status" value="1"/>
</dbReference>
<dbReference type="PROSITE" id="PS51918">
    <property type="entry name" value="RADICAL_SAM"/>
    <property type="match status" value="1"/>
</dbReference>
<comment type="function">
    <text evidence="1">Specifically methylates position 2 of adenine 2503 in 23S rRNA and position 2 of adenine 37 in tRNAs. m2A2503 modification seems to play a crucial role in the proofreading step occurring at the peptidyl transferase center and thus would serve to optimize ribosomal fidelity.</text>
</comment>
<comment type="catalytic activity">
    <reaction evidence="1">
        <text>adenosine(2503) in 23S rRNA + 2 reduced [2Fe-2S]-[ferredoxin] + 2 S-adenosyl-L-methionine = 2-methyladenosine(2503) in 23S rRNA + 5'-deoxyadenosine + L-methionine + 2 oxidized [2Fe-2S]-[ferredoxin] + S-adenosyl-L-homocysteine</text>
        <dbReference type="Rhea" id="RHEA:42916"/>
        <dbReference type="Rhea" id="RHEA-COMP:10000"/>
        <dbReference type="Rhea" id="RHEA-COMP:10001"/>
        <dbReference type="Rhea" id="RHEA-COMP:10152"/>
        <dbReference type="Rhea" id="RHEA-COMP:10282"/>
        <dbReference type="ChEBI" id="CHEBI:17319"/>
        <dbReference type="ChEBI" id="CHEBI:33737"/>
        <dbReference type="ChEBI" id="CHEBI:33738"/>
        <dbReference type="ChEBI" id="CHEBI:57844"/>
        <dbReference type="ChEBI" id="CHEBI:57856"/>
        <dbReference type="ChEBI" id="CHEBI:59789"/>
        <dbReference type="ChEBI" id="CHEBI:74411"/>
        <dbReference type="ChEBI" id="CHEBI:74497"/>
        <dbReference type="EC" id="2.1.1.192"/>
    </reaction>
</comment>
<comment type="catalytic activity">
    <reaction evidence="1">
        <text>adenosine(37) in tRNA + 2 reduced [2Fe-2S]-[ferredoxin] + 2 S-adenosyl-L-methionine = 2-methyladenosine(37) in tRNA + 5'-deoxyadenosine + L-methionine + 2 oxidized [2Fe-2S]-[ferredoxin] + S-adenosyl-L-homocysteine</text>
        <dbReference type="Rhea" id="RHEA:43332"/>
        <dbReference type="Rhea" id="RHEA-COMP:10000"/>
        <dbReference type="Rhea" id="RHEA-COMP:10001"/>
        <dbReference type="Rhea" id="RHEA-COMP:10162"/>
        <dbReference type="Rhea" id="RHEA-COMP:10485"/>
        <dbReference type="ChEBI" id="CHEBI:17319"/>
        <dbReference type="ChEBI" id="CHEBI:33737"/>
        <dbReference type="ChEBI" id="CHEBI:33738"/>
        <dbReference type="ChEBI" id="CHEBI:57844"/>
        <dbReference type="ChEBI" id="CHEBI:57856"/>
        <dbReference type="ChEBI" id="CHEBI:59789"/>
        <dbReference type="ChEBI" id="CHEBI:74411"/>
        <dbReference type="ChEBI" id="CHEBI:74497"/>
        <dbReference type="EC" id="2.1.1.192"/>
    </reaction>
</comment>
<comment type="cofactor">
    <cofactor evidence="1">
        <name>[4Fe-4S] cluster</name>
        <dbReference type="ChEBI" id="CHEBI:49883"/>
    </cofactor>
    <text evidence="1">Binds 1 [4Fe-4S] cluster. The cluster is coordinated with 3 cysteines and an exchangeable S-adenosyl-L-methionine.</text>
</comment>
<comment type="subcellular location">
    <subcellularLocation>
        <location evidence="1">Cytoplasm</location>
    </subcellularLocation>
</comment>
<comment type="miscellaneous">
    <text evidence="1">Reaction proceeds by a ping-pong mechanism involving intermediate methylation of a conserved cysteine residue.</text>
</comment>
<comment type="similarity">
    <text evidence="1">Belongs to the radical SAM superfamily. RlmN family.</text>
</comment>
<organism>
    <name type="scientific">Aromatoleum aromaticum (strain DSM 19018 / LMG 30748 / EbN1)</name>
    <name type="common">Azoarcus sp. (strain EbN1)</name>
    <dbReference type="NCBI Taxonomy" id="76114"/>
    <lineage>
        <taxon>Bacteria</taxon>
        <taxon>Pseudomonadati</taxon>
        <taxon>Pseudomonadota</taxon>
        <taxon>Betaproteobacteria</taxon>
        <taxon>Rhodocyclales</taxon>
        <taxon>Rhodocyclaceae</taxon>
        <taxon>Aromatoleum</taxon>
    </lineage>
</organism>
<gene>
    <name evidence="1" type="primary">rlmN</name>
    <name type="ordered locus">AZOSEA06780</name>
    <name type="ORF">ebA1268</name>
</gene>
<reference key="1">
    <citation type="journal article" date="2005" name="Arch. Microbiol.">
        <title>The genome sequence of an anaerobic aromatic-degrading denitrifying bacterium, strain EbN1.</title>
        <authorList>
            <person name="Rabus R."/>
            <person name="Kube M."/>
            <person name="Heider J."/>
            <person name="Beck A."/>
            <person name="Heitmann K."/>
            <person name="Widdel F."/>
            <person name="Reinhardt R."/>
        </authorList>
    </citation>
    <scope>NUCLEOTIDE SEQUENCE [LARGE SCALE GENOMIC DNA]</scope>
    <source>
        <strain>DSM 19018 / LMG 30748 / EbN1</strain>
    </source>
</reference>
<keyword id="KW-0004">4Fe-4S</keyword>
<keyword id="KW-0963">Cytoplasm</keyword>
<keyword id="KW-1015">Disulfide bond</keyword>
<keyword id="KW-0408">Iron</keyword>
<keyword id="KW-0411">Iron-sulfur</keyword>
<keyword id="KW-0479">Metal-binding</keyword>
<keyword id="KW-0489">Methyltransferase</keyword>
<keyword id="KW-1185">Reference proteome</keyword>
<keyword id="KW-0698">rRNA processing</keyword>
<keyword id="KW-0949">S-adenosyl-L-methionine</keyword>
<keyword id="KW-0808">Transferase</keyword>
<keyword id="KW-0819">tRNA processing</keyword>